<feature type="initiator methionine" description="Removed" evidence="8">
    <location>
        <position position="1"/>
    </location>
</feature>
<feature type="chain" id="PRO_0000453531" description="Methylmalonyl-CoA decarboxylase subunit epsilon">
    <location>
        <begin position="2"/>
        <end position="55"/>
    </location>
</feature>
<accession>Q57490</accession>
<organism>
    <name type="scientific">Veillonella parvula</name>
    <name type="common">Staphylococcus parvulus</name>
    <dbReference type="NCBI Taxonomy" id="29466"/>
    <lineage>
        <taxon>Bacteria</taxon>
        <taxon>Bacillati</taxon>
        <taxon>Bacillota</taxon>
        <taxon>Negativicutes</taxon>
        <taxon>Veillonellales</taxon>
        <taxon>Veillonellaceae</taxon>
        <taxon>Veillonella</taxon>
    </lineage>
</organism>
<gene>
    <name evidence="10" type="primary">mmdE</name>
    <name evidence="12" type="ORF">FNLLGLLA_00683</name>
    <name evidence="13" type="ORF">HMPREF1865_00704</name>
</gene>
<evidence type="ECO:0000269" key="1">
    <source>
    </source>
</evidence>
<evidence type="ECO:0000269" key="2">
    <source>
    </source>
</evidence>
<evidence type="ECO:0000269" key="3">
    <source>
    </source>
</evidence>
<evidence type="ECO:0000269" key="4">
    <source>
    </source>
</evidence>
<evidence type="ECO:0000269" key="5">
    <source>
    </source>
</evidence>
<evidence type="ECO:0000269" key="6">
    <source>
    </source>
</evidence>
<evidence type="ECO:0000269" key="7">
    <source>
    </source>
</evidence>
<evidence type="ECO:0000269" key="8">
    <source>
    </source>
</evidence>
<evidence type="ECO:0000269" key="9">
    <source ref="7"/>
</evidence>
<evidence type="ECO:0000303" key="10">
    <source>
    </source>
</evidence>
<evidence type="ECO:0000305" key="11"/>
<evidence type="ECO:0000312" key="12">
    <source>
        <dbReference type="EMBL" id="CAB1275125.1"/>
    </source>
</evidence>
<evidence type="ECO:0000312" key="13">
    <source>
        <dbReference type="EMBL" id="KXB86196.1"/>
    </source>
</evidence>
<protein>
    <recommendedName>
        <fullName evidence="11">Methylmalonyl-CoA decarboxylase subunit epsilon</fullName>
        <ecNumber evidence="2 5 7">7.2.4.3</ecNumber>
    </recommendedName>
</protein>
<reference key="1">
    <citation type="journal article" date="1993" name="J. Biol. Chem.">
        <title>Sequence of the sodium ion pump methylmalonyl-CoA decarboxylase from Veillonella parvula.</title>
        <authorList>
            <person name="Huder J.B."/>
            <person name="Dimroth P."/>
        </authorList>
    </citation>
    <scope>NUCLEOTIDE SEQUENCE [GENOMIC DNA]</scope>
    <scope>PROTEIN SEQUENCE OF 2-7</scope>
    <scope>SUBUNIT</scope>
</reference>
<reference key="2">
    <citation type="submission" date="2016-01" db="EMBL/GenBank/DDBJ databases">
        <authorList>
            <person name="Mitreva M."/>
            <person name="Pepin K.H."/>
            <person name="Mihindukulasuriya K.A."/>
            <person name="Fulton R."/>
            <person name="Fronick C."/>
            <person name="O'Laughlin M."/>
            <person name="Miner T."/>
            <person name="Herter B."/>
            <person name="Rosa B.A."/>
            <person name="Cordes M."/>
            <person name="Tomlinson C."/>
            <person name="Wollam A."/>
            <person name="Palsikar V.B."/>
            <person name="Mardis E.R."/>
            <person name="Wilson R.K."/>
        </authorList>
    </citation>
    <scope>NUCLEOTIDE SEQUENCE [LARGE SCALE GENOMIC DNA]</scope>
    <source>
        <strain>DNF00876</strain>
    </source>
</reference>
<reference key="3">
    <citation type="submission" date="2020-03" db="EMBL/GenBank/DDBJ databases">
        <authorList>
            <person name="Beloin C."/>
        </authorList>
    </citation>
    <scope>NUCLEOTIDE SEQUENCE [LARGE SCALE GENOMIC DNA]</scope>
    <source>
        <strain>SKV38</strain>
    </source>
</reference>
<reference key="4">
    <citation type="journal article" date="1982" name="Nature">
        <title>Conversion of the chemical energy of methylmalonyl-CoA decarboxylation into a Na+ gradient.</title>
        <authorList>
            <person name="Hilpert W."/>
            <person name="Dimroth P."/>
        </authorList>
    </citation>
    <scope>FUNCTION</scope>
    <scope>SUBCELLULAR LOCATION</scope>
</reference>
<reference key="5">
    <citation type="journal article" date="1983" name="Eur. J. Biochem.">
        <title>Purification and characterization of a new sodium-transport decarboxylase. Methylmalonyl-CoA decarboxylase from Veillonella alcalescens.</title>
        <authorList>
            <person name="Hilpert W."/>
            <person name="Dimroth P."/>
        </authorList>
    </citation>
    <scope>FUNCTION</scope>
    <scope>CATALYTIC ACTIVITY</scope>
    <scope>ACTIVITY REGULATION</scope>
    <scope>SUBCELLULAR LOCATION</scope>
    <source>
        <strain>ATCC 17745</strain>
    </source>
</reference>
<reference key="6">
    <citation type="journal article" date="1984" name="Eur. J. Biochem.">
        <title>Reconstitution of Na+ transport from purified methylmalonyl-CoA decarboxylase and phospholipid vesicles.</title>
        <authorList>
            <person name="Hilpert W."/>
            <person name="Dimroth P."/>
        </authorList>
    </citation>
    <scope>SUBCELLULAR LOCATION</scope>
    <source>
        <strain>ATCC 17745</strain>
    </source>
</reference>
<reference key="7">
    <citation type="journal article" date="1986" name="FEBS Lett.">
        <title>Morphological properties of proteoliposomes reconstituted with the Na+ pump methylmalonyl-CoA decarboxylase from Veillonella alcalescens.</title>
        <authorList>
            <person name="Rohde M."/>
            <person name="Dakena P."/>
            <person name="Mayer F."/>
            <person name="Dimroth P."/>
        </authorList>
    </citation>
    <scope>SUBCELLULAR LOCATION</scope>
</reference>
<reference key="8">
    <citation type="journal article" date="1987" name="FEBS Lett.">
        <title>Stereochemistry of the methylmalonyl-CoA decarboxylation reaction.</title>
        <authorList>
            <person name="Hoffmann A."/>
            <person name="Dimroth P."/>
        </authorList>
    </citation>
    <scope>FUNCTION</scope>
</reference>
<reference key="9">
    <citation type="journal article" date="1989" name="Eur. J. Biochem.">
        <title>The carboxyltransferase activity of the sodium-ion-translocating methylmalonyl-CoA decarboxylase of Veillonella alcalescens.</title>
        <authorList>
            <person name="Hoffmann A."/>
            <person name="Hilpert W."/>
            <person name="Dimroth P."/>
        </authorList>
    </citation>
    <scope>FUNCTION</scope>
    <scope>CATALYTIC ACTIVITY</scope>
    <source>
        <strain>ATCC 17745</strain>
    </source>
</reference>
<reference key="10">
    <citation type="journal article" date="1991" name="Eur. J. Biochem.">
        <title>On the mechanism of sodium ion translocation by methylmalonyl-CoA decarboxylase from Veillonella alcalescens.</title>
        <authorList>
            <person name="Hilpert W."/>
            <person name="Dimroth P."/>
        </authorList>
    </citation>
    <scope>FUNCTION</scope>
    <source>
        <strain>ATCC 17745</strain>
    </source>
</reference>
<reference key="11">
    <citation type="journal article" date="1995" name="J. Bacteriol.">
        <title>Expression of the sodium ion pump methylmalonyl-coenzyme A-decarboxylase from Veillonella parvula and of mutated enzyme specimens in Escherichia coli.</title>
        <authorList>
            <person name="Huder J.B."/>
            <person name="Dimroth P."/>
        </authorList>
    </citation>
    <scope>FUNCTION</scope>
    <scope>CATALYTIC ACTIVITY</scope>
    <scope>ACTIVITY REGULATION</scope>
    <scope>SUBUNIT</scope>
    <scope>DISRUPTION PHENOTYPE</scope>
</reference>
<comment type="function">
    <text evidence="1 2 3 5 6 7">Subunit of the sodium ion pump methylmalonyl-CoA decarboxylase, which converts the chemical energy of a decarboxylation reaction into an electrochemical gradient of Na(+) ions across the cytoplasmic membrane, thereby creating a sodium ion motive force that is used for ATP synthesis (PubMed:1991479, PubMed:2920730, PubMed:3609308, PubMed:6852015, PubMed:7070502, PubMed:7601825). The epsilon subunit seems not important for the catalysis of either decarboxylation or Na(+) transport, but it improves binding of the alpha subunit and plays an important role in stabilizing the methylmalonyl-CoA-decarboxylase enzyme complex (PubMed:7601825). Can also convert malonyl-CoA into acetyl-CoA (PubMed:2920730, PubMed:6852015).</text>
</comment>
<comment type="catalytic activity">
    <reaction evidence="2 5 7">
        <text>(S)-methylmalonyl-CoA + Na(+)(in) + H(+)(out) = propanoyl-CoA + Na(+)(out) + CO2</text>
        <dbReference type="Rhea" id="RHEA:21396"/>
        <dbReference type="ChEBI" id="CHEBI:15378"/>
        <dbReference type="ChEBI" id="CHEBI:16526"/>
        <dbReference type="ChEBI" id="CHEBI:29101"/>
        <dbReference type="ChEBI" id="CHEBI:57327"/>
        <dbReference type="ChEBI" id="CHEBI:57392"/>
        <dbReference type="EC" id="7.2.4.3"/>
    </reaction>
</comment>
<comment type="activity regulation">
    <text evidence="5 7">Completely inhibited by avidin.</text>
</comment>
<comment type="subunit">
    <text evidence="7 8">The methylmalonyl-CoA decarboxylase is composed of five subunits: the carboxyltransferase alpha subunit (MmdA), the tunnel beta subunit (MmdB), the biotin-containing gamma subunit (MmdC), and the delta (MmdD) and epsilon (MmdE) subunits.</text>
</comment>
<comment type="subcellular location">
    <subcellularLocation>
        <location evidence="4 5 6 9">Cell membrane</location>
    </subcellularLocation>
</comment>
<comment type="disruption phenotype">
    <text evidence="7">Deletion of the gene does not abolish methylmalonyl-CoA-decarboxylase or Na(+) transport activity, but it affects the stability of the complex, especially the binding of the alpha subunit. Mutant lacking this gene plus the 3'-terminal half of the mmdD gene lacks methylmalonyl-CoA decarboxylase activity.</text>
</comment>
<sequence>MSNATTTNGKAPSQDVVAVIVGALAAMGYSADQIAHIRPIVSYNWKMEGRLRGNR</sequence>
<keyword id="KW-1003">Cell membrane</keyword>
<keyword id="KW-0903">Direct protein sequencing</keyword>
<keyword id="KW-0406">Ion transport</keyword>
<keyword id="KW-0472">Membrane</keyword>
<keyword id="KW-0915">Sodium</keyword>
<keyword id="KW-0739">Sodium transport</keyword>
<keyword id="KW-1278">Translocase</keyword>
<keyword id="KW-0813">Transport</keyword>
<dbReference type="EC" id="7.2.4.3" evidence="2 5 7"/>
<dbReference type="EMBL" id="L22208">
    <property type="protein sequence ID" value="AAC36822.1"/>
    <property type="molecule type" value="Unassigned_DNA"/>
</dbReference>
<dbReference type="EMBL" id="Z24754">
    <property type="protein sequence ID" value="CAA80874.1"/>
    <property type="molecule type" value="Genomic_DNA"/>
</dbReference>
<dbReference type="EMBL" id="LSDP01000020">
    <property type="protein sequence ID" value="KXB86196.1"/>
    <property type="molecule type" value="Genomic_DNA"/>
</dbReference>
<dbReference type="EMBL" id="LR778174">
    <property type="protein sequence ID" value="CAB1275125.1"/>
    <property type="molecule type" value="Genomic_DNA"/>
</dbReference>
<dbReference type="PIR" id="C49094">
    <property type="entry name" value="C49094"/>
</dbReference>
<dbReference type="RefSeq" id="WP_004696483.1">
    <property type="nucleotide sequence ID" value="NZ_AP031417.1"/>
</dbReference>
<dbReference type="STRING" id="29466.GCA_002005185_01893"/>
<dbReference type="TCDB" id="3.B.1.1.2">
    <property type="family name" value="the na(+)-transporting carboxylic acid decarboxylase (nat-dc) family"/>
</dbReference>
<dbReference type="PATRIC" id="fig|29466.15.peg.692"/>
<dbReference type="GO" id="GO:0005886">
    <property type="term" value="C:plasma membrane"/>
    <property type="evidence" value="ECO:0007669"/>
    <property type="project" value="UniProtKB-SubCell"/>
</dbReference>
<dbReference type="GO" id="GO:0006814">
    <property type="term" value="P:sodium ion transport"/>
    <property type="evidence" value="ECO:0007669"/>
    <property type="project" value="UniProtKB-KW"/>
</dbReference>
<proteinExistence type="evidence at protein level"/>
<name>MMDE_VEIPA</name>